<name>RPP14_PONAB</name>
<gene>
    <name type="primary">RPP14</name>
</gene>
<protein>
    <recommendedName>
        <fullName>Ribonuclease P protein subunit p14</fullName>
    </recommendedName>
</protein>
<keyword id="KW-0539">Nucleus</keyword>
<keyword id="KW-1185">Reference proteome</keyword>
<keyword id="KW-0819">tRNA processing</keyword>
<evidence type="ECO:0000250" key="1">
    <source>
        <dbReference type="UniProtKB" id="O95059"/>
    </source>
</evidence>
<evidence type="ECO:0000305" key="2"/>
<reference key="1">
    <citation type="submission" date="2004-11" db="EMBL/GenBank/DDBJ databases">
        <authorList>
            <consortium name="The German cDNA consortium"/>
        </authorList>
    </citation>
    <scope>NUCLEOTIDE SEQUENCE [LARGE SCALE MRNA]</scope>
    <source>
        <tissue>Heart</tissue>
    </source>
</reference>
<accession>Q5RB79</accession>
<feature type="chain" id="PRO_0000140012" description="Ribonuclease P protein subunit p14">
    <location>
        <begin position="1"/>
        <end position="124"/>
    </location>
</feature>
<proteinExistence type="evidence at transcript level"/>
<sequence>MPAPAATYERVVYKNPSEYHYMKVCLEFQDCGVGLNAAQFKQLLISAVKDLFGEVDAALPLDILTYEEKTLSAILRICSSGLVKLWSSLTLLGSYKGKKCAFRVIQVSPFLLALSGNSRELVLD</sequence>
<organism>
    <name type="scientific">Pongo abelii</name>
    <name type="common">Sumatran orangutan</name>
    <name type="synonym">Pongo pygmaeus abelii</name>
    <dbReference type="NCBI Taxonomy" id="9601"/>
    <lineage>
        <taxon>Eukaryota</taxon>
        <taxon>Metazoa</taxon>
        <taxon>Chordata</taxon>
        <taxon>Craniata</taxon>
        <taxon>Vertebrata</taxon>
        <taxon>Euteleostomi</taxon>
        <taxon>Mammalia</taxon>
        <taxon>Eutheria</taxon>
        <taxon>Euarchontoglires</taxon>
        <taxon>Primates</taxon>
        <taxon>Haplorrhini</taxon>
        <taxon>Catarrhini</taxon>
        <taxon>Hominidae</taxon>
        <taxon>Pongo</taxon>
    </lineage>
</organism>
<comment type="function">
    <text evidence="1">Component of ribonuclease P, a ribonucleoprotein complex that generates mature tRNA molecules by cleaving their 5'-ends.</text>
</comment>
<comment type="subunit">
    <text evidence="1">RNase P consists of a catalytic RNA moiety and about 10 protein subunits; POP1, POP4, POP5, POP7, RPP14, RPP21, RPP25, RPP30, RPP38 and RPP40. Within the RNase P complex, POP1, POP7 and RPP25 form the 'finger' subcomplex, POP5, RPP14, RPP40 and homodimeric RPP30 form the 'palm' subcomplex, and RPP21, POP4 and RPP38 form the 'wrist' subcomplex. All subunits of the RNase P complex interact with the catalytic RNA.</text>
</comment>
<comment type="subcellular location">
    <subcellularLocation>
        <location evidence="1">Nucleus</location>
        <location evidence="1">Nucleolus</location>
    </subcellularLocation>
</comment>
<comment type="similarity">
    <text evidence="2">Belongs to the eukaryotic/archaeal RNase P protein component 2 family.</text>
</comment>
<dbReference type="EMBL" id="CR858774">
    <property type="protein sequence ID" value="CAH90981.1"/>
    <property type="molecule type" value="mRNA"/>
</dbReference>
<dbReference type="RefSeq" id="NP_001127358.1">
    <property type="nucleotide sequence ID" value="NM_001133886.1"/>
</dbReference>
<dbReference type="RefSeq" id="XP_009237129.1">
    <property type="nucleotide sequence ID" value="XM_009238854.4"/>
</dbReference>
<dbReference type="SMR" id="Q5RB79"/>
<dbReference type="FunCoup" id="Q5RB79">
    <property type="interactions" value="905"/>
</dbReference>
<dbReference type="STRING" id="9601.ENSPPYP00000015396"/>
<dbReference type="GeneID" id="100174423"/>
<dbReference type="KEGG" id="pon:100174423"/>
<dbReference type="CTD" id="11102"/>
<dbReference type="eggNOG" id="ENOG502S10S">
    <property type="taxonomic scope" value="Eukaryota"/>
</dbReference>
<dbReference type="HOGENOM" id="CLU_157358_0_0_1"/>
<dbReference type="InParanoid" id="Q5RB79"/>
<dbReference type="OrthoDB" id="2262258at2759"/>
<dbReference type="TreeFam" id="TF324711"/>
<dbReference type="Proteomes" id="UP000001595">
    <property type="component" value="Chromosome 3"/>
</dbReference>
<dbReference type="GO" id="GO:0030681">
    <property type="term" value="C:multimeric ribonuclease P complex"/>
    <property type="evidence" value="ECO:0000250"/>
    <property type="project" value="UniProtKB"/>
</dbReference>
<dbReference type="GO" id="GO:0005730">
    <property type="term" value="C:nucleolus"/>
    <property type="evidence" value="ECO:0000250"/>
    <property type="project" value="UniProtKB"/>
</dbReference>
<dbReference type="GO" id="GO:0004526">
    <property type="term" value="F:ribonuclease P activity"/>
    <property type="evidence" value="ECO:0007669"/>
    <property type="project" value="UniProtKB-EC"/>
</dbReference>
<dbReference type="GO" id="GO:0033204">
    <property type="term" value="F:ribonuclease P RNA binding"/>
    <property type="evidence" value="ECO:0000250"/>
    <property type="project" value="UniProtKB"/>
</dbReference>
<dbReference type="GO" id="GO:0001682">
    <property type="term" value="P:tRNA 5'-leader removal"/>
    <property type="evidence" value="ECO:0000250"/>
    <property type="project" value="UniProtKB"/>
</dbReference>
<dbReference type="FunFam" id="3.30.70.3250:FF:000002">
    <property type="entry name" value="ribonuclease P protein subunit p14"/>
    <property type="match status" value="1"/>
</dbReference>
<dbReference type="Gene3D" id="3.30.70.3250">
    <property type="entry name" value="Ribonuclease P, Pop5 subunit"/>
    <property type="match status" value="1"/>
</dbReference>
<dbReference type="InterPro" id="IPR002759">
    <property type="entry name" value="Pop5/Rpp14/Rnp2-like"/>
</dbReference>
<dbReference type="InterPro" id="IPR038085">
    <property type="entry name" value="Rnp2-like_sf"/>
</dbReference>
<dbReference type="PANTHER" id="PTHR15441">
    <property type="entry name" value="RIBONUCLEASE P PROTEIN SUBUNIT P14"/>
    <property type="match status" value="1"/>
</dbReference>
<dbReference type="PANTHER" id="PTHR15441:SF1">
    <property type="entry name" value="RIBONUCLEASE P PROTEIN SUBUNIT P14"/>
    <property type="match status" value="1"/>
</dbReference>
<dbReference type="Pfam" id="PF01900">
    <property type="entry name" value="RNase_P_Rpp14"/>
    <property type="match status" value="1"/>
</dbReference>
<dbReference type="SUPFAM" id="SSF160350">
    <property type="entry name" value="Rnp2-like"/>
    <property type="match status" value="1"/>
</dbReference>